<sequence>MLQPKRTKFRKQMTGHNRGLALRGSKVSFGEFALKAVARGRLTARQIESARRALTRHVKRGGKIWIRVFPDKPVTKKPLEVRMGKGKGSVEYWVAQIQPGKVLYEIEGVSEELAREAFALAAAKLPLATSFVKRTVM</sequence>
<evidence type="ECO:0000255" key="1">
    <source>
        <dbReference type="HAMAP-Rule" id="MF_01342"/>
    </source>
</evidence>
<evidence type="ECO:0000305" key="2"/>
<organism>
    <name type="scientific">Pseudomonas entomophila (strain L48)</name>
    <dbReference type="NCBI Taxonomy" id="384676"/>
    <lineage>
        <taxon>Bacteria</taxon>
        <taxon>Pseudomonadati</taxon>
        <taxon>Pseudomonadota</taxon>
        <taxon>Gammaproteobacteria</taxon>
        <taxon>Pseudomonadales</taxon>
        <taxon>Pseudomonadaceae</taxon>
        <taxon>Pseudomonas</taxon>
    </lineage>
</organism>
<reference key="1">
    <citation type="journal article" date="2006" name="Nat. Biotechnol.">
        <title>Complete genome sequence of the entomopathogenic and metabolically versatile soil bacterium Pseudomonas entomophila.</title>
        <authorList>
            <person name="Vodovar N."/>
            <person name="Vallenet D."/>
            <person name="Cruveiller S."/>
            <person name="Rouy Z."/>
            <person name="Barbe V."/>
            <person name="Acosta C."/>
            <person name="Cattolico L."/>
            <person name="Jubin C."/>
            <person name="Lajus A."/>
            <person name="Segurens B."/>
            <person name="Vacherie B."/>
            <person name="Wincker P."/>
            <person name="Weissenbach J."/>
            <person name="Lemaitre B."/>
            <person name="Medigue C."/>
            <person name="Boccard F."/>
        </authorList>
    </citation>
    <scope>NUCLEOTIDE SEQUENCE [LARGE SCALE GENOMIC DNA]</scope>
    <source>
        <strain>L48</strain>
    </source>
</reference>
<dbReference type="EMBL" id="CT573326">
    <property type="protein sequence ID" value="CAK13443.1"/>
    <property type="molecule type" value="Genomic_DNA"/>
</dbReference>
<dbReference type="RefSeq" id="WP_009397508.1">
    <property type="nucleotide sequence ID" value="NC_008027.1"/>
</dbReference>
<dbReference type="SMR" id="Q1IFV9"/>
<dbReference type="STRING" id="384676.PSEEN0497"/>
<dbReference type="GeneID" id="93675529"/>
<dbReference type="KEGG" id="pen:PSEEN0497"/>
<dbReference type="eggNOG" id="COG0197">
    <property type="taxonomic scope" value="Bacteria"/>
</dbReference>
<dbReference type="HOGENOM" id="CLU_078858_2_1_6"/>
<dbReference type="OrthoDB" id="9802589at2"/>
<dbReference type="Proteomes" id="UP000000658">
    <property type="component" value="Chromosome"/>
</dbReference>
<dbReference type="GO" id="GO:0022625">
    <property type="term" value="C:cytosolic large ribosomal subunit"/>
    <property type="evidence" value="ECO:0007669"/>
    <property type="project" value="TreeGrafter"/>
</dbReference>
<dbReference type="GO" id="GO:0019843">
    <property type="term" value="F:rRNA binding"/>
    <property type="evidence" value="ECO:0007669"/>
    <property type="project" value="UniProtKB-UniRule"/>
</dbReference>
<dbReference type="GO" id="GO:0003735">
    <property type="term" value="F:structural constituent of ribosome"/>
    <property type="evidence" value="ECO:0007669"/>
    <property type="project" value="InterPro"/>
</dbReference>
<dbReference type="GO" id="GO:0000049">
    <property type="term" value="F:tRNA binding"/>
    <property type="evidence" value="ECO:0007669"/>
    <property type="project" value="UniProtKB-KW"/>
</dbReference>
<dbReference type="GO" id="GO:0006412">
    <property type="term" value="P:translation"/>
    <property type="evidence" value="ECO:0007669"/>
    <property type="project" value="UniProtKB-UniRule"/>
</dbReference>
<dbReference type="CDD" id="cd01433">
    <property type="entry name" value="Ribosomal_L16_L10e"/>
    <property type="match status" value="1"/>
</dbReference>
<dbReference type="FunFam" id="3.90.1170.10:FF:000001">
    <property type="entry name" value="50S ribosomal protein L16"/>
    <property type="match status" value="1"/>
</dbReference>
<dbReference type="Gene3D" id="3.90.1170.10">
    <property type="entry name" value="Ribosomal protein L10e/L16"/>
    <property type="match status" value="1"/>
</dbReference>
<dbReference type="HAMAP" id="MF_01342">
    <property type="entry name" value="Ribosomal_uL16"/>
    <property type="match status" value="1"/>
</dbReference>
<dbReference type="InterPro" id="IPR047873">
    <property type="entry name" value="Ribosomal_uL16"/>
</dbReference>
<dbReference type="InterPro" id="IPR000114">
    <property type="entry name" value="Ribosomal_uL16_bact-type"/>
</dbReference>
<dbReference type="InterPro" id="IPR020798">
    <property type="entry name" value="Ribosomal_uL16_CS"/>
</dbReference>
<dbReference type="InterPro" id="IPR016180">
    <property type="entry name" value="Ribosomal_uL16_dom"/>
</dbReference>
<dbReference type="InterPro" id="IPR036920">
    <property type="entry name" value="Ribosomal_uL16_sf"/>
</dbReference>
<dbReference type="NCBIfam" id="TIGR01164">
    <property type="entry name" value="rplP_bact"/>
    <property type="match status" value="1"/>
</dbReference>
<dbReference type="PANTHER" id="PTHR12220">
    <property type="entry name" value="50S/60S RIBOSOMAL PROTEIN L16"/>
    <property type="match status" value="1"/>
</dbReference>
<dbReference type="PANTHER" id="PTHR12220:SF13">
    <property type="entry name" value="LARGE RIBOSOMAL SUBUNIT PROTEIN UL16M"/>
    <property type="match status" value="1"/>
</dbReference>
<dbReference type="Pfam" id="PF00252">
    <property type="entry name" value="Ribosomal_L16"/>
    <property type="match status" value="1"/>
</dbReference>
<dbReference type="PRINTS" id="PR00060">
    <property type="entry name" value="RIBOSOMALL16"/>
</dbReference>
<dbReference type="SUPFAM" id="SSF54686">
    <property type="entry name" value="Ribosomal protein L16p/L10e"/>
    <property type="match status" value="1"/>
</dbReference>
<dbReference type="PROSITE" id="PS00586">
    <property type="entry name" value="RIBOSOMAL_L16_1"/>
    <property type="match status" value="1"/>
</dbReference>
<dbReference type="PROSITE" id="PS00701">
    <property type="entry name" value="RIBOSOMAL_L16_2"/>
    <property type="match status" value="1"/>
</dbReference>
<protein>
    <recommendedName>
        <fullName evidence="1">Large ribosomal subunit protein uL16</fullName>
    </recommendedName>
    <alternativeName>
        <fullName evidence="2">50S ribosomal protein L16</fullName>
    </alternativeName>
</protein>
<keyword id="KW-0687">Ribonucleoprotein</keyword>
<keyword id="KW-0689">Ribosomal protein</keyword>
<keyword id="KW-0694">RNA-binding</keyword>
<keyword id="KW-0699">rRNA-binding</keyword>
<keyword id="KW-0820">tRNA-binding</keyword>
<name>RL16_PSEE4</name>
<proteinExistence type="inferred from homology"/>
<gene>
    <name evidence="1" type="primary">rplP</name>
    <name type="ordered locus">PSEEN0497</name>
</gene>
<comment type="function">
    <text evidence="1">Binds 23S rRNA and is also seen to make contacts with the A and possibly P site tRNAs.</text>
</comment>
<comment type="subunit">
    <text evidence="1">Part of the 50S ribosomal subunit.</text>
</comment>
<comment type="similarity">
    <text evidence="1">Belongs to the universal ribosomal protein uL16 family.</text>
</comment>
<feature type="chain" id="PRO_1000054682" description="Large ribosomal subunit protein uL16">
    <location>
        <begin position="1"/>
        <end position="137"/>
    </location>
</feature>
<accession>Q1IFV9</accession>